<accession>Q1MAZ3</accession>
<evidence type="ECO:0000255" key="1">
    <source>
        <dbReference type="HAMAP-Rule" id="MF_00530"/>
    </source>
</evidence>
<proteinExistence type="inferred from homology"/>
<keyword id="KW-0066">ATP synthesis</keyword>
<keyword id="KW-0997">Cell inner membrane</keyword>
<keyword id="KW-1003">Cell membrane</keyword>
<keyword id="KW-0139">CF(1)</keyword>
<keyword id="KW-0375">Hydrogen ion transport</keyword>
<keyword id="KW-0406">Ion transport</keyword>
<keyword id="KW-0472">Membrane</keyword>
<keyword id="KW-0813">Transport</keyword>
<reference key="1">
    <citation type="journal article" date="2006" name="Genome Biol.">
        <title>The genome of Rhizobium leguminosarum has recognizable core and accessory components.</title>
        <authorList>
            <person name="Young J.P.W."/>
            <person name="Crossman L.C."/>
            <person name="Johnston A.W.B."/>
            <person name="Thomson N.R."/>
            <person name="Ghazoui Z.F."/>
            <person name="Hull K.H."/>
            <person name="Wexler M."/>
            <person name="Curson A.R.J."/>
            <person name="Todd J.D."/>
            <person name="Poole P.S."/>
            <person name="Mauchline T.H."/>
            <person name="East A.K."/>
            <person name="Quail M.A."/>
            <person name="Churcher C."/>
            <person name="Arrowsmith C."/>
            <person name="Cherevach I."/>
            <person name="Chillingworth T."/>
            <person name="Clarke K."/>
            <person name="Cronin A."/>
            <person name="Davis P."/>
            <person name="Fraser A."/>
            <person name="Hance Z."/>
            <person name="Hauser H."/>
            <person name="Jagels K."/>
            <person name="Moule S."/>
            <person name="Mungall K."/>
            <person name="Norbertczak H."/>
            <person name="Rabbinowitsch E."/>
            <person name="Sanders M."/>
            <person name="Simmonds M."/>
            <person name="Whitehead S."/>
            <person name="Parkhill J."/>
        </authorList>
    </citation>
    <scope>NUCLEOTIDE SEQUENCE [LARGE SCALE GENOMIC DNA]</scope>
    <source>
        <strain>DSM 114642 / LMG 32736 / 3841</strain>
    </source>
</reference>
<organism>
    <name type="scientific">Rhizobium johnstonii (strain DSM 114642 / LMG 32736 / 3841)</name>
    <name type="common">Rhizobium leguminosarum bv. viciae</name>
    <dbReference type="NCBI Taxonomy" id="216596"/>
    <lineage>
        <taxon>Bacteria</taxon>
        <taxon>Pseudomonadati</taxon>
        <taxon>Pseudomonadota</taxon>
        <taxon>Alphaproteobacteria</taxon>
        <taxon>Hyphomicrobiales</taxon>
        <taxon>Rhizobiaceae</taxon>
        <taxon>Rhizobium/Agrobacterium group</taxon>
        <taxon>Rhizobium</taxon>
        <taxon>Rhizobium johnstonii</taxon>
    </lineage>
</organism>
<comment type="function">
    <text evidence="1">Produces ATP from ADP in the presence of a proton gradient across the membrane.</text>
</comment>
<comment type="subunit">
    <text>F-type ATPases have 2 components, CF(1) - the catalytic core - and CF(0) - the membrane proton channel. CF(1) has five subunits: alpha(3), beta(3), gamma(1), delta(1), epsilon(1). CF(0) has three main subunits: a, b and c.</text>
</comment>
<comment type="subcellular location">
    <subcellularLocation>
        <location evidence="1">Cell inner membrane</location>
        <topology evidence="1">Peripheral membrane protein</topology>
    </subcellularLocation>
</comment>
<comment type="similarity">
    <text evidence="1">Belongs to the ATPase epsilon chain family.</text>
</comment>
<feature type="chain" id="PRO_0000265871" description="ATP synthase epsilon chain">
    <location>
        <begin position="1"/>
        <end position="135"/>
    </location>
</feature>
<name>ATPE_RHIJ3</name>
<sequence length="135" mass="15031">MADNFNFELVSPERLLLSEMVTEVVIPATEGEMTVMANHAPTMTTIKPGVVSVRSASGKKQDYVVFGGFADILPTGCTLLAESAVPVEELQKDELTRRIEAARQELEHAELHEHKSKLEHFIMEMTHLRGVVEQD</sequence>
<gene>
    <name evidence="1" type="primary">atpC</name>
    <name type="ordered locus">RL4405</name>
</gene>
<protein>
    <recommendedName>
        <fullName evidence="1">ATP synthase epsilon chain</fullName>
    </recommendedName>
    <alternativeName>
        <fullName evidence="1">ATP synthase F1 sector epsilon subunit</fullName>
    </alternativeName>
    <alternativeName>
        <fullName evidence="1">F-ATPase epsilon subunit</fullName>
    </alternativeName>
</protein>
<dbReference type="EMBL" id="AM236080">
    <property type="protein sequence ID" value="CAK09892.1"/>
    <property type="molecule type" value="Genomic_DNA"/>
</dbReference>
<dbReference type="RefSeq" id="WP_003543460.1">
    <property type="nucleotide sequence ID" value="NC_008380.1"/>
</dbReference>
<dbReference type="SMR" id="Q1MAZ3"/>
<dbReference type="EnsemblBacteria" id="CAK09892">
    <property type="protein sequence ID" value="CAK09892"/>
    <property type="gene ID" value="RL4405"/>
</dbReference>
<dbReference type="KEGG" id="rle:RL4405"/>
<dbReference type="eggNOG" id="COG0355">
    <property type="taxonomic scope" value="Bacteria"/>
</dbReference>
<dbReference type="HOGENOM" id="CLU_084338_2_1_5"/>
<dbReference type="Proteomes" id="UP000006575">
    <property type="component" value="Chromosome"/>
</dbReference>
<dbReference type="GO" id="GO:0005886">
    <property type="term" value="C:plasma membrane"/>
    <property type="evidence" value="ECO:0007669"/>
    <property type="project" value="UniProtKB-SubCell"/>
</dbReference>
<dbReference type="GO" id="GO:0045259">
    <property type="term" value="C:proton-transporting ATP synthase complex"/>
    <property type="evidence" value="ECO:0007669"/>
    <property type="project" value="UniProtKB-KW"/>
</dbReference>
<dbReference type="GO" id="GO:0005524">
    <property type="term" value="F:ATP binding"/>
    <property type="evidence" value="ECO:0007669"/>
    <property type="project" value="UniProtKB-UniRule"/>
</dbReference>
<dbReference type="GO" id="GO:0046933">
    <property type="term" value="F:proton-transporting ATP synthase activity, rotational mechanism"/>
    <property type="evidence" value="ECO:0007669"/>
    <property type="project" value="UniProtKB-UniRule"/>
</dbReference>
<dbReference type="CDD" id="cd12152">
    <property type="entry name" value="F1-ATPase_delta"/>
    <property type="match status" value="1"/>
</dbReference>
<dbReference type="Gene3D" id="2.60.15.10">
    <property type="entry name" value="F0F1 ATP synthase delta/epsilon subunit, N-terminal"/>
    <property type="match status" value="1"/>
</dbReference>
<dbReference type="HAMAP" id="MF_00530">
    <property type="entry name" value="ATP_synth_epsil_bac"/>
    <property type="match status" value="1"/>
</dbReference>
<dbReference type="InterPro" id="IPR001469">
    <property type="entry name" value="ATP_synth_F1_dsu/esu"/>
</dbReference>
<dbReference type="InterPro" id="IPR020546">
    <property type="entry name" value="ATP_synth_F1_dsu/esu_N"/>
</dbReference>
<dbReference type="InterPro" id="IPR036771">
    <property type="entry name" value="ATPsynth_dsu/esu_N"/>
</dbReference>
<dbReference type="NCBIfam" id="TIGR01216">
    <property type="entry name" value="ATP_synt_epsi"/>
    <property type="match status" value="1"/>
</dbReference>
<dbReference type="NCBIfam" id="NF001851">
    <property type="entry name" value="PRK00571.2-4"/>
    <property type="match status" value="1"/>
</dbReference>
<dbReference type="PANTHER" id="PTHR13822">
    <property type="entry name" value="ATP SYNTHASE DELTA/EPSILON CHAIN"/>
    <property type="match status" value="1"/>
</dbReference>
<dbReference type="PANTHER" id="PTHR13822:SF10">
    <property type="entry name" value="ATP SYNTHASE EPSILON CHAIN, CHLOROPLASTIC"/>
    <property type="match status" value="1"/>
</dbReference>
<dbReference type="Pfam" id="PF02823">
    <property type="entry name" value="ATP-synt_DE_N"/>
    <property type="match status" value="1"/>
</dbReference>
<dbReference type="SUPFAM" id="SSF51344">
    <property type="entry name" value="Epsilon subunit of F1F0-ATP synthase N-terminal domain"/>
    <property type="match status" value="1"/>
</dbReference>